<gene>
    <name type="primary">CLCC1</name>
</gene>
<name>CLCC1_BOVIN</name>
<dbReference type="EMBL" id="BC116020">
    <property type="protein sequence ID" value="AAI16021.1"/>
    <property type="molecule type" value="mRNA"/>
</dbReference>
<dbReference type="RefSeq" id="NP_001069252.1">
    <property type="nucleotide sequence ID" value="NM_001075784.1"/>
</dbReference>
<dbReference type="RefSeq" id="XP_005204173.1">
    <property type="nucleotide sequence ID" value="XM_005204116.5"/>
</dbReference>
<dbReference type="RefSeq" id="XP_010801469.1">
    <property type="nucleotide sequence ID" value="XM_010803167.4"/>
</dbReference>
<dbReference type="RefSeq" id="XP_015319222.1">
    <property type="nucleotide sequence ID" value="XM_015463736.3"/>
</dbReference>
<dbReference type="FunCoup" id="Q1LZF8">
    <property type="interactions" value="2895"/>
</dbReference>
<dbReference type="STRING" id="9913.ENSBTAP00000022767"/>
<dbReference type="PaxDb" id="9913-ENSBTAP00000022767"/>
<dbReference type="Ensembl" id="ENSBTAT00000022767.5">
    <property type="protein sequence ID" value="ENSBTAP00000022767.3"/>
    <property type="gene ID" value="ENSBTAG00000017129.5"/>
</dbReference>
<dbReference type="GeneID" id="519085"/>
<dbReference type="KEGG" id="bta:519085"/>
<dbReference type="CTD" id="23155"/>
<dbReference type="VEuPathDB" id="HostDB:ENSBTAG00000017129"/>
<dbReference type="VGNC" id="VGNC:27394">
    <property type="gene designation" value="CLCC1"/>
</dbReference>
<dbReference type="eggNOG" id="ENOG502QSP7">
    <property type="taxonomic scope" value="Eukaryota"/>
</dbReference>
<dbReference type="GeneTree" id="ENSGT00390000016611"/>
<dbReference type="HOGENOM" id="CLU_034552_1_1_1"/>
<dbReference type="InParanoid" id="Q1LZF8"/>
<dbReference type="OMA" id="VQDDEWI"/>
<dbReference type="OrthoDB" id="10037397at2759"/>
<dbReference type="TreeFam" id="TF328890"/>
<dbReference type="Proteomes" id="UP000009136">
    <property type="component" value="Chromosome 3"/>
</dbReference>
<dbReference type="Bgee" id="ENSBTAG00000017129">
    <property type="expression patterns" value="Expressed in oocyte and 108 other cell types or tissues"/>
</dbReference>
<dbReference type="GO" id="GO:0034707">
    <property type="term" value="C:chloride channel complex"/>
    <property type="evidence" value="ECO:0007669"/>
    <property type="project" value="UniProtKB-KW"/>
</dbReference>
<dbReference type="GO" id="GO:0005783">
    <property type="term" value="C:endoplasmic reticulum"/>
    <property type="evidence" value="ECO:0000318"/>
    <property type="project" value="GO_Central"/>
</dbReference>
<dbReference type="GO" id="GO:0005789">
    <property type="term" value="C:endoplasmic reticulum membrane"/>
    <property type="evidence" value="ECO:0007669"/>
    <property type="project" value="UniProtKB-SubCell"/>
</dbReference>
<dbReference type="GO" id="GO:0016020">
    <property type="term" value="C:membrane"/>
    <property type="evidence" value="ECO:0000318"/>
    <property type="project" value="GO_Central"/>
</dbReference>
<dbReference type="GO" id="GO:0044233">
    <property type="term" value="C:mitochondria-associated endoplasmic reticulum membrane contact site"/>
    <property type="evidence" value="ECO:0000250"/>
    <property type="project" value="UniProtKB"/>
</dbReference>
<dbReference type="GO" id="GO:0005254">
    <property type="term" value="F:chloride channel activity"/>
    <property type="evidence" value="ECO:0000318"/>
    <property type="project" value="GO_Central"/>
</dbReference>
<dbReference type="GO" id="GO:0032469">
    <property type="term" value="P:endoplasmic reticulum calcium ion homeostasis"/>
    <property type="evidence" value="ECO:0007669"/>
    <property type="project" value="Ensembl"/>
</dbReference>
<dbReference type="InterPro" id="IPR009231">
    <property type="entry name" value="Chloride_chnl_CLIC-like"/>
</dbReference>
<dbReference type="PANTHER" id="PTHR34093">
    <property type="entry name" value="CHLORIDE CHANNEL CLIC-LIKE PROTEIN 1"/>
    <property type="match status" value="1"/>
</dbReference>
<dbReference type="PANTHER" id="PTHR34093:SF1">
    <property type="entry name" value="CHLORIDE CHANNEL CLIC-LIKE PROTEIN 1"/>
    <property type="match status" value="1"/>
</dbReference>
<dbReference type="Pfam" id="PF05934">
    <property type="entry name" value="MCLC"/>
    <property type="match status" value="1"/>
</dbReference>
<evidence type="ECO:0000250" key="1">
    <source>
        <dbReference type="UniProtKB" id="Q96S66"/>
    </source>
</evidence>
<evidence type="ECO:0000250" key="2">
    <source>
        <dbReference type="UniProtKB" id="Q99LI2"/>
    </source>
</evidence>
<evidence type="ECO:0000250" key="3">
    <source>
        <dbReference type="UniProtKB" id="Q9WU61"/>
    </source>
</evidence>
<evidence type="ECO:0000255" key="4"/>
<evidence type="ECO:0000256" key="5">
    <source>
        <dbReference type="SAM" id="MobiDB-lite"/>
    </source>
</evidence>
<evidence type="ECO:0000305" key="6"/>
<comment type="function">
    <text evidence="1 2">Anion-selective channel with Ca(2+)-dependent and voltage-independent gating. Permeable to small monovalent anions with selectivity for bromide &gt; chloride &gt; nitrate &gt; fluoride (By similarity). Operates in the endoplasmic reticulum (ER) membrane where it mediates chloride efflux to compensate for the loss of positive charges from the ER lumen upon Ca(2+) release. Contributes to the maintenance of ER Ca(2+) pools and activation of unfolded protein response to prevent accumulation of misfolded proteins in the ER lumen. Particularly involved in ER homeostasis mechanisms underlying motor neurons and retinal photoreceptors survival (By similarity).</text>
</comment>
<comment type="catalytic activity">
    <reaction evidence="1 2">
        <text>chloride(in) = chloride(out)</text>
        <dbReference type="Rhea" id="RHEA:29823"/>
        <dbReference type="ChEBI" id="CHEBI:17996"/>
    </reaction>
</comment>
<comment type="catalytic activity">
    <reaction evidence="2">
        <text>bromide(in) = bromide(out)</text>
        <dbReference type="Rhea" id="RHEA:75383"/>
        <dbReference type="ChEBI" id="CHEBI:15858"/>
    </reaction>
</comment>
<comment type="catalytic activity">
    <reaction evidence="2">
        <text>nitrate(in) = nitrate(out)</text>
        <dbReference type="Rhea" id="RHEA:34923"/>
        <dbReference type="ChEBI" id="CHEBI:17632"/>
    </reaction>
</comment>
<comment type="catalytic activity">
    <reaction evidence="2">
        <text>fluoride(in) = fluoride(out)</text>
        <dbReference type="Rhea" id="RHEA:76159"/>
        <dbReference type="ChEBI" id="CHEBI:17051"/>
    </reaction>
</comment>
<comment type="subunit">
    <text evidence="1">Homomultimers. Interacts with mitochondrial protein PIGBOS1 (via C-terminus); the interaction occurs at the mitochondria-associated endoplasmic reticulum (ER) membrane, a zone of contact between the ER and mitochondrial membranes, but does not appear to play a role in ER-mitochondria tethering and is not affected by ER stress. Interacts with CALR.</text>
</comment>
<comment type="subcellular location">
    <subcellularLocation>
        <location evidence="3">Endoplasmic reticulum membrane</location>
        <topology evidence="4">Multi-pass membrane protein</topology>
    </subcellularLocation>
    <text evidence="1 2">Within the endoplasmic reticulum (ER), localizes to the mitochondria-associated ER membrane, a zone of contact between the ER and mitochondrial membranes. Enriched in the rough ER.</text>
</comment>
<comment type="similarity">
    <text evidence="6">Belongs to the chloride channel MCLC family.</text>
</comment>
<feature type="signal peptide" evidence="4">
    <location>
        <begin position="1"/>
        <end position="18"/>
    </location>
</feature>
<feature type="chain" id="PRO_0000297681" description="Chloride channel CLIC-like protein 1">
    <location>
        <begin position="19"/>
        <end position="542"/>
    </location>
</feature>
<feature type="topological domain" description="Lumenal" evidence="2">
    <location>
        <begin position="19"/>
        <end position="184"/>
    </location>
</feature>
<feature type="transmembrane region" description="Helical" evidence="4">
    <location>
        <begin position="185"/>
        <end position="205"/>
    </location>
</feature>
<feature type="topological domain" description="Cytoplasmic" evidence="2">
    <location>
        <begin position="206"/>
        <end position="216"/>
    </location>
</feature>
<feature type="transmembrane region" description="Helical" evidence="4">
    <location>
        <begin position="217"/>
        <end position="237"/>
    </location>
</feature>
<feature type="topological domain" description="Lumenal" evidence="2">
    <location>
        <begin position="238"/>
        <end position="329"/>
    </location>
</feature>
<feature type="transmembrane region" description="Helical" evidence="4">
    <location>
        <begin position="330"/>
        <end position="350"/>
    </location>
</feature>
<feature type="topological domain" description="Cytoplasmic" evidence="2">
    <location>
        <begin position="351"/>
        <end position="542"/>
    </location>
</feature>
<feature type="region of interest" description="Disordered" evidence="5">
    <location>
        <begin position="369"/>
        <end position="394"/>
    </location>
</feature>
<feature type="region of interest" description="Disordered" evidence="5">
    <location>
        <begin position="452"/>
        <end position="542"/>
    </location>
</feature>
<feature type="compositionally biased region" description="Basic and acidic residues" evidence="5">
    <location>
        <begin position="377"/>
        <end position="389"/>
    </location>
</feature>
<feature type="compositionally biased region" description="Low complexity" evidence="5">
    <location>
        <begin position="480"/>
        <end position="491"/>
    </location>
</feature>
<feature type="site" description="Ca(2+)-mediated inhibition of channel activity" evidence="1">
    <location>
        <position position="25"/>
    </location>
</feature>
<feature type="site" description="Ca(2+)-mediated inhibition of channel activity" evidence="1">
    <location>
        <position position="181"/>
    </location>
</feature>
<feature type="modified residue" description="Phosphoserine" evidence="1">
    <location>
        <position position="438"/>
    </location>
</feature>
<feature type="modified residue" description="Phosphoserine" evidence="1">
    <location>
        <position position="464"/>
    </location>
</feature>
<feature type="modified residue" description="Phosphothreonine" evidence="1">
    <location>
        <position position="482"/>
    </location>
</feature>
<feature type="modified residue" description="Phosphoserine" evidence="1">
    <location>
        <position position="532"/>
    </location>
</feature>
<reference key="1">
    <citation type="submission" date="2006-05" db="EMBL/GenBank/DDBJ databases">
        <authorList>
            <consortium name="NIH - Mammalian Gene Collection (MGC) project"/>
        </authorList>
    </citation>
    <scope>NUCLEOTIDE SEQUENCE [LARGE SCALE MRNA]</scope>
    <source>
        <strain>Hereford</strain>
        <tissue>Ascending colon</tissue>
    </source>
</reference>
<protein>
    <recommendedName>
        <fullName>Chloride channel CLIC-like protein 1</fullName>
    </recommendedName>
    <alternativeName>
        <fullName evidence="1">ER anion channel 1</fullName>
        <shortName evidence="1">ERAC1</shortName>
    </alternativeName>
</protein>
<organism>
    <name type="scientific">Bos taurus</name>
    <name type="common">Bovine</name>
    <dbReference type="NCBI Taxonomy" id="9913"/>
    <lineage>
        <taxon>Eukaryota</taxon>
        <taxon>Metazoa</taxon>
        <taxon>Chordata</taxon>
        <taxon>Craniata</taxon>
        <taxon>Vertebrata</taxon>
        <taxon>Euteleostomi</taxon>
        <taxon>Mammalia</taxon>
        <taxon>Eutheria</taxon>
        <taxon>Laurasiatheria</taxon>
        <taxon>Artiodactyla</taxon>
        <taxon>Ruminantia</taxon>
        <taxon>Pecora</taxon>
        <taxon>Bovidae</taxon>
        <taxon>Bovinae</taxon>
        <taxon>Bos</taxon>
    </lineage>
</organism>
<keyword id="KW-0868">Chloride</keyword>
<keyword id="KW-0869">Chloride channel</keyword>
<keyword id="KW-0256">Endoplasmic reticulum</keyword>
<keyword id="KW-0407">Ion channel</keyword>
<keyword id="KW-0406">Ion transport</keyword>
<keyword id="KW-0472">Membrane</keyword>
<keyword id="KW-0597">Phosphoprotein</keyword>
<keyword id="KW-1185">Reference proteome</keyword>
<keyword id="KW-0732">Signal</keyword>
<keyword id="KW-0812">Transmembrane</keyword>
<keyword id="KW-1133">Transmembrane helix</keyword>
<keyword id="KW-0813">Transport</keyword>
<proteinExistence type="evidence at transcript level"/>
<accession>Q1LZF8</accession>
<sequence>MLYSLLLCECLWLITAYAHDDEWIDPTDMLNYDAASGRMRKSQVKYGISEKEEVNPDLSCANELSECYNRLDSLTYKIDECEKQKRKDYESQSNPVFRRYLNKILIETKKLGLPDENKHDMHYDAEIILKRQTLLEIQKFLSGEDWKPGALDDALSDILINFKFHDFETWKWRFEEFFGVDPYNVFMVLLCLLCIVALVATELWTYVRWYTQLKRVFFISFLISLGWNWMYLYKLAFAQHQAEVAKMEPLNNVCAEKMNWSGSLWEWLRSSWTYKDDPCQKYYELLLVNPIWLVPPTKALAVTFTNFVTEPLKHVGKGAGEFIKALMKEIPVLLHIPVLIIMALAVLSFCYGAGKSVNMLRHVGGPEREAPQALQAGERRRQQKIDYRPHGGAGDADFYYRGQISPIEQGPNDNTYEGRRDVLRERDVGLRFQTGNKSPEVLRPFDLQEAEAREHPKVVPGLKSPNLESKPREMGEIPGESTPTESSTESSQPAKPVSGQKVSEGVEGCPAVEKAQLRTDAAGGPEEGSTCSPASTAVEVCG</sequence>